<gene>
    <name type="primary">SEC23</name>
    <name type="ORF">UMAG_01624</name>
</gene>
<dbReference type="EMBL" id="CM003142">
    <property type="protein sequence ID" value="KIS70448.1"/>
    <property type="molecule type" value="Genomic_DNA"/>
</dbReference>
<dbReference type="RefSeq" id="XP_011387617.1">
    <property type="nucleotide sequence ID" value="XM_011389315.1"/>
</dbReference>
<dbReference type="SMR" id="Q4PE39"/>
<dbReference type="FunCoup" id="Q4PE39">
    <property type="interactions" value="379"/>
</dbReference>
<dbReference type="STRING" id="237631.Q4PE39"/>
<dbReference type="EnsemblFungi" id="KIS70448">
    <property type="protein sequence ID" value="KIS70448"/>
    <property type="gene ID" value="UMAG_01624"/>
</dbReference>
<dbReference type="GeneID" id="23562564"/>
<dbReference type="KEGG" id="uma:UMAG_01624"/>
<dbReference type="VEuPathDB" id="FungiDB:UMAG_01624"/>
<dbReference type="eggNOG" id="KOG1986">
    <property type="taxonomic scope" value="Eukaryota"/>
</dbReference>
<dbReference type="HOGENOM" id="CLU_008658_3_0_1"/>
<dbReference type="InParanoid" id="Q4PE39"/>
<dbReference type="OMA" id="FPPHYAE"/>
<dbReference type="OrthoDB" id="10256289at2759"/>
<dbReference type="Proteomes" id="UP000000561">
    <property type="component" value="Chromosome 3"/>
</dbReference>
<dbReference type="GO" id="GO:0030127">
    <property type="term" value="C:COPII vesicle coat"/>
    <property type="evidence" value="ECO:0000318"/>
    <property type="project" value="GO_Central"/>
</dbReference>
<dbReference type="GO" id="GO:0070971">
    <property type="term" value="C:endoplasmic reticulum exit site"/>
    <property type="evidence" value="ECO:0000318"/>
    <property type="project" value="GO_Central"/>
</dbReference>
<dbReference type="GO" id="GO:0005789">
    <property type="term" value="C:endoplasmic reticulum membrane"/>
    <property type="evidence" value="ECO:0007669"/>
    <property type="project" value="UniProtKB-SubCell"/>
</dbReference>
<dbReference type="GO" id="GO:0000139">
    <property type="term" value="C:Golgi membrane"/>
    <property type="evidence" value="ECO:0007669"/>
    <property type="project" value="UniProtKB-SubCell"/>
</dbReference>
<dbReference type="GO" id="GO:0005096">
    <property type="term" value="F:GTPase activator activity"/>
    <property type="evidence" value="ECO:0000318"/>
    <property type="project" value="GO_Central"/>
</dbReference>
<dbReference type="GO" id="GO:0008270">
    <property type="term" value="F:zinc ion binding"/>
    <property type="evidence" value="ECO:0007669"/>
    <property type="project" value="InterPro"/>
</dbReference>
<dbReference type="GO" id="GO:0090110">
    <property type="term" value="P:COPII-coated vesicle cargo loading"/>
    <property type="evidence" value="ECO:0000318"/>
    <property type="project" value="GO_Central"/>
</dbReference>
<dbReference type="GO" id="GO:0006886">
    <property type="term" value="P:intracellular protein transport"/>
    <property type="evidence" value="ECO:0007669"/>
    <property type="project" value="InterPro"/>
</dbReference>
<dbReference type="CDD" id="cd01478">
    <property type="entry name" value="Sec23-like"/>
    <property type="match status" value="1"/>
</dbReference>
<dbReference type="CDD" id="cd11287">
    <property type="entry name" value="Sec23_C"/>
    <property type="match status" value="1"/>
</dbReference>
<dbReference type="FunFam" id="1.20.120.730:FF:000001">
    <property type="entry name" value="Protein transport protein SEC23"/>
    <property type="match status" value="1"/>
</dbReference>
<dbReference type="FunFam" id="2.30.30.380:FF:000001">
    <property type="entry name" value="Protein transport protein SEC23"/>
    <property type="match status" value="1"/>
</dbReference>
<dbReference type="FunFam" id="3.40.20.10:FF:000006">
    <property type="entry name" value="Protein transport protein SEC23"/>
    <property type="match status" value="1"/>
</dbReference>
<dbReference type="Gene3D" id="2.60.40.1670">
    <property type="entry name" value="beta-sandwich domain of Sec23/24"/>
    <property type="match status" value="1"/>
</dbReference>
<dbReference type="Gene3D" id="1.20.120.730">
    <property type="entry name" value="Sec23/Sec24 helical domain"/>
    <property type="match status" value="1"/>
</dbReference>
<dbReference type="Gene3D" id="3.40.20.10">
    <property type="entry name" value="Severin"/>
    <property type="match status" value="1"/>
</dbReference>
<dbReference type="Gene3D" id="3.40.50.410">
    <property type="entry name" value="von Willebrand factor, type A domain"/>
    <property type="match status" value="1"/>
</dbReference>
<dbReference type="Gene3D" id="2.30.30.380">
    <property type="entry name" value="Zn-finger domain of Sec23/24"/>
    <property type="match status" value="1"/>
</dbReference>
<dbReference type="InterPro" id="IPR029006">
    <property type="entry name" value="ADF-H/Gelsolin-like_dom_sf"/>
</dbReference>
<dbReference type="InterPro" id="IPR007123">
    <property type="entry name" value="Gelsolin-like_dom"/>
</dbReference>
<dbReference type="InterPro" id="IPR036180">
    <property type="entry name" value="Gelsolin-like_dom_sf"/>
</dbReference>
<dbReference type="InterPro" id="IPR037364">
    <property type="entry name" value="Sec23"/>
</dbReference>
<dbReference type="InterPro" id="IPR006900">
    <property type="entry name" value="Sec23/24_helical_dom"/>
</dbReference>
<dbReference type="InterPro" id="IPR036175">
    <property type="entry name" value="Sec23/24_helical_dom_sf"/>
</dbReference>
<dbReference type="InterPro" id="IPR006896">
    <property type="entry name" value="Sec23/24_trunk_dom"/>
</dbReference>
<dbReference type="InterPro" id="IPR012990">
    <property type="entry name" value="Sec23_24_beta_S"/>
</dbReference>
<dbReference type="InterPro" id="IPR037550">
    <property type="entry name" value="Sec23_C"/>
</dbReference>
<dbReference type="InterPro" id="IPR036465">
    <property type="entry name" value="vWFA_dom_sf"/>
</dbReference>
<dbReference type="InterPro" id="IPR006895">
    <property type="entry name" value="Znf_Sec23_Sec24"/>
</dbReference>
<dbReference type="InterPro" id="IPR036174">
    <property type="entry name" value="Znf_Sec23_Sec24_sf"/>
</dbReference>
<dbReference type="PANTHER" id="PTHR11141">
    <property type="entry name" value="PROTEIN TRANSPORT PROTEIN SEC23"/>
    <property type="match status" value="1"/>
</dbReference>
<dbReference type="PANTHER" id="PTHR11141:SF0">
    <property type="entry name" value="PROTEIN TRANSPORT PROTEIN SEC23"/>
    <property type="match status" value="1"/>
</dbReference>
<dbReference type="Pfam" id="PF00626">
    <property type="entry name" value="Gelsolin"/>
    <property type="match status" value="1"/>
</dbReference>
<dbReference type="Pfam" id="PF08033">
    <property type="entry name" value="Sec23_BS"/>
    <property type="match status" value="1"/>
</dbReference>
<dbReference type="Pfam" id="PF04815">
    <property type="entry name" value="Sec23_helical"/>
    <property type="match status" value="1"/>
</dbReference>
<dbReference type="Pfam" id="PF04811">
    <property type="entry name" value="Sec23_trunk"/>
    <property type="match status" value="1"/>
</dbReference>
<dbReference type="Pfam" id="PF04810">
    <property type="entry name" value="zf-Sec23_Sec24"/>
    <property type="match status" value="1"/>
</dbReference>
<dbReference type="SUPFAM" id="SSF81995">
    <property type="entry name" value="beta-sandwich domain of Sec23/24"/>
    <property type="match status" value="1"/>
</dbReference>
<dbReference type="SUPFAM" id="SSF82754">
    <property type="entry name" value="C-terminal, gelsolin-like domain of Sec23/24"/>
    <property type="match status" value="1"/>
</dbReference>
<dbReference type="SUPFAM" id="SSF81811">
    <property type="entry name" value="Helical domain of Sec23/24"/>
    <property type="match status" value="1"/>
</dbReference>
<dbReference type="SUPFAM" id="SSF53300">
    <property type="entry name" value="vWA-like"/>
    <property type="match status" value="1"/>
</dbReference>
<dbReference type="SUPFAM" id="SSF82919">
    <property type="entry name" value="Zn-finger domain of Sec23/24"/>
    <property type="match status" value="1"/>
</dbReference>
<proteinExistence type="inferred from homology"/>
<accession>Q4PE39</accession>
<accession>A0A0D1CVJ5</accession>
<comment type="function">
    <text evidence="1">Component of the coat protein complex II (COPII) which promotes the formation of transport vesicles from the endoplasmic reticulum (ER). The coat has two main functions, the physical deformation of the endoplasmic reticulum membrane into vesicles and the selection of cargo molecules (By similarity).</text>
</comment>
<comment type="subunit">
    <text evidence="1">The COPII coat is composed of at least 5 proteins: the SEC23/24 complex, the SEC13/31 complex, and the protein SAR1.</text>
</comment>
<comment type="subcellular location">
    <subcellularLocation>
        <location evidence="1">Cytoplasm</location>
    </subcellularLocation>
    <subcellularLocation>
        <location evidence="1">Cytoplasmic vesicle</location>
        <location evidence="1">COPII-coated vesicle membrane</location>
        <topology evidence="1">Peripheral membrane protein</topology>
        <orientation evidence="1">Cytoplasmic side</orientation>
    </subcellularLocation>
    <subcellularLocation>
        <location evidence="1">Endoplasmic reticulum membrane</location>
        <topology evidence="1">Peripheral membrane protein</topology>
        <orientation evidence="1">Cytoplasmic side</orientation>
    </subcellularLocation>
    <subcellularLocation>
        <location evidence="1">Golgi apparatus membrane</location>
        <topology evidence="1">Peripheral membrane protein</topology>
        <orientation evidence="1">Cytoplasmic side</orientation>
    </subcellularLocation>
</comment>
<comment type="similarity">
    <text evidence="3">Belongs to the SEC23/SEC24 family. SEC23 subfamily.</text>
</comment>
<evidence type="ECO:0000250" key="1"/>
<evidence type="ECO:0000256" key="2">
    <source>
        <dbReference type="SAM" id="MobiDB-lite"/>
    </source>
</evidence>
<evidence type="ECO:0000305" key="3"/>
<name>SEC23_MYCMD</name>
<keyword id="KW-0963">Cytoplasm</keyword>
<keyword id="KW-0968">Cytoplasmic vesicle</keyword>
<keyword id="KW-0256">Endoplasmic reticulum</keyword>
<keyword id="KW-0931">ER-Golgi transport</keyword>
<keyword id="KW-0333">Golgi apparatus</keyword>
<keyword id="KW-0472">Membrane</keyword>
<keyword id="KW-0479">Metal-binding</keyword>
<keyword id="KW-0653">Protein transport</keyword>
<keyword id="KW-1185">Reference proteome</keyword>
<keyword id="KW-0813">Transport</keyword>
<keyword id="KW-0862">Zinc</keyword>
<feature type="chain" id="PRO_0000295473" description="Protein transport protein SEC23">
    <location>
        <begin position="1"/>
        <end position="773"/>
    </location>
</feature>
<feature type="region of interest" description="Disordered" evidence="2">
    <location>
        <begin position="204"/>
        <end position="229"/>
    </location>
</feature>
<feature type="binding site" evidence="1">
    <location>
        <position position="56"/>
    </location>
    <ligand>
        <name>Zn(2+)</name>
        <dbReference type="ChEBI" id="CHEBI:29105"/>
    </ligand>
</feature>
<feature type="binding site" evidence="1">
    <location>
        <position position="60"/>
    </location>
    <ligand>
        <name>Zn(2+)</name>
        <dbReference type="ChEBI" id="CHEBI:29105"/>
    </ligand>
</feature>
<feature type="binding site" evidence="1">
    <location>
        <position position="79"/>
    </location>
    <ligand>
        <name>Zn(2+)</name>
        <dbReference type="ChEBI" id="CHEBI:29105"/>
    </ligand>
</feature>
<feature type="binding site" evidence="1">
    <location>
        <position position="82"/>
    </location>
    <ligand>
        <name>Zn(2+)</name>
        <dbReference type="ChEBI" id="CHEBI:29105"/>
    </ligand>
</feature>
<reference key="1">
    <citation type="journal article" date="2006" name="Nature">
        <title>Insights from the genome of the biotrophic fungal plant pathogen Ustilago maydis.</title>
        <authorList>
            <person name="Kaemper J."/>
            <person name="Kahmann R."/>
            <person name="Boelker M."/>
            <person name="Ma L.-J."/>
            <person name="Brefort T."/>
            <person name="Saville B.J."/>
            <person name="Banuett F."/>
            <person name="Kronstad J.W."/>
            <person name="Gold S.E."/>
            <person name="Mueller O."/>
            <person name="Perlin M.H."/>
            <person name="Woesten H.A.B."/>
            <person name="de Vries R."/>
            <person name="Ruiz-Herrera J."/>
            <person name="Reynaga-Pena C.G."/>
            <person name="Snetselaar K."/>
            <person name="McCann M."/>
            <person name="Perez-Martin J."/>
            <person name="Feldbruegge M."/>
            <person name="Basse C.W."/>
            <person name="Steinberg G."/>
            <person name="Ibeas J.I."/>
            <person name="Holloman W."/>
            <person name="Guzman P."/>
            <person name="Farman M.L."/>
            <person name="Stajich J.E."/>
            <person name="Sentandreu R."/>
            <person name="Gonzalez-Prieto J.M."/>
            <person name="Kennell J.C."/>
            <person name="Molina L."/>
            <person name="Schirawski J."/>
            <person name="Mendoza-Mendoza A."/>
            <person name="Greilinger D."/>
            <person name="Muench K."/>
            <person name="Roessel N."/>
            <person name="Scherer M."/>
            <person name="Vranes M."/>
            <person name="Ladendorf O."/>
            <person name="Vincon V."/>
            <person name="Fuchs U."/>
            <person name="Sandrock B."/>
            <person name="Meng S."/>
            <person name="Ho E.C.H."/>
            <person name="Cahill M.J."/>
            <person name="Boyce K.J."/>
            <person name="Klose J."/>
            <person name="Klosterman S.J."/>
            <person name="Deelstra H.J."/>
            <person name="Ortiz-Castellanos L."/>
            <person name="Li W."/>
            <person name="Sanchez-Alonso P."/>
            <person name="Schreier P.H."/>
            <person name="Haeuser-Hahn I."/>
            <person name="Vaupel M."/>
            <person name="Koopmann E."/>
            <person name="Friedrich G."/>
            <person name="Voss H."/>
            <person name="Schlueter T."/>
            <person name="Margolis J."/>
            <person name="Platt D."/>
            <person name="Swimmer C."/>
            <person name="Gnirke A."/>
            <person name="Chen F."/>
            <person name="Vysotskaia V."/>
            <person name="Mannhaupt G."/>
            <person name="Gueldener U."/>
            <person name="Muensterkoetter M."/>
            <person name="Haase D."/>
            <person name="Oesterheld M."/>
            <person name="Mewes H.-W."/>
            <person name="Mauceli E.W."/>
            <person name="DeCaprio D."/>
            <person name="Wade C.M."/>
            <person name="Butler J."/>
            <person name="Young S.K."/>
            <person name="Jaffe D.B."/>
            <person name="Calvo S.E."/>
            <person name="Nusbaum C."/>
            <person name="Galagan J.E."/>
            <person name="Birren B.W."/>
        </authorList>
    </citation>
    <scope>NUCLEOTIDE SEQUENCE [LARGE SCALE GENOMIC DNA]</scope>
    <source>
        <strain>DSM 14603 / FGSC 9021 / UM521</strain>
    </source>
</reference>
<reference key="2">
    <citation type="submission" date="2014-09" db="EMBL/GenBank/DDBJ databases">
        <authorList>
            <person name="Gueldener U."/>
            <person name="Muensterkoetter M."/>
            <person name="Walter M.C."/>
            <person name="Mannhaupt G."/>
            <person name="Kahmann R."/>
        </authorList>
    </citation>
    <scope>GENOME REANNOTATION</scope>
    <source>
        <strain>DSM 14603 / FGSC 9021 / UM521</strain>
    </source>
</reference>
<sequence>MNVDDVEDRDGVRLSWNVWPSSKIEATRTVVPISALYTPLKEREDLPPVLYEPVTCKPPCRAVLNPYCQIDVRGKLWICPFCLSRNAFPPHYKDISSTNLPAELLPKYTTIEYTLSRPAQIPPIFLYVVDTCMDDDDLKALREALVVSLSLLPPNALVGLITYGTMAQVHELGYDACPKSYVFRGTKEYAPKAIQDMLGLNPGARPMGAGAPGAPGGPSQAPRPPNATAQMGASRFLLPVSQCEFQLTQILEQLQKDPWPVANDKRSQRCTGVALSVAVGMLETTFPNTGARVMLFCGGPATEGPGMVVSTELRERIRSHHDIDKDNAKYYKRAIKFYEAMAKRAAGNGHTIDVFAGCLDQVGLLEMKGLANLTNGHMILADSFQMGIFKQSFHRLFQKDDQGHLQMGFNATLDVQCTKELKVSGLIGHAVSANKKSGCVGETEIGIGQTSAWKLCSLTPRTSAGIYFEVVTPAGQPMQPGSRGLIQFVTHYQHASGQYRLRVTTIARNFAEGGSGQIAASFDQEAAAVLMARIAVFKAEIDDSPDVLRWLDRMLIRLCQKFADYRKDDPTSFRLGENFSIYPQFMFHLRRSQFLQVFNNSPDETAFYRHVLNTEDVNNSLIMIQPTLMSYGFEGPPQPVLLDSVSIRPDVVLLLDTFFHILIFHGETVAQWRKAGYQDQEGYENFKEVLENPRADAQDLLADRFPIPRYIVCDQNGSQARFLLSKLNPSTTHMSGGMYGSSGNSGAAIFTDDVSLQVFMEHLKRLAVGASSN</sequence>
<organism>
    <name type="scientific">Mycosarcoma maydis</name>
    <name type="common">Corn smut fungus</name>
    <name type="synonym">Ustilago maydis</name>
    <dbReference type="NCBI Taxonomy" id="5270"/>
    <lineage>
        <taxon>Eukaryota</taxon>
        <taxon>Fungi</taxon>
        <taxon>Dikarya</taxon>
        <taxon>Basidiomycota</taxon>
        <taxon>Ustilaginomycotina</taxon>
        <taxon>Ustilaginomycetes</taxon>
        <taxon>Ustilaginales</taxon>
        <taxon>Ustilaginaceae</taxon>
        <taxon>Mycosarcoma</taxon>
    </lineage>
</organism>
<protein>
    <recommendedName>
        <fullName>Protein transport protein SEC23</fullName>
    </recommendedName>
</protein>